<feature type="chain" id="PRO_0000336215" description="UPF0102 protein Nmul_A0195">
    <location>
        <begin position="1"/>
        <end position="119"/>
    </location>
</feature>
<sequence length="119" mass="13814">MTLRLKGNQAERYAEAFLAGHRLVLVQRNYRCRFGEIDLIMRDGETLVFVEVRMRTNRNFGDAGSSITLSKQRKVVRAARHYLLSLRTEPCCRFDAVLLSGNEGRDIEWIRNAFDVNYS</sequence>
<proteinExistence type="inferred from homology"/>
<gene>
    <name type="ordered locus">Nmul_A0195</name>
</gene>
<keyword id="KW-1185">Reference proteome</keyword>
<accession>Q2YCL8</accession>
<dbReference type="EMBL" id="CP000103">
    <property type="protein sequence ID" value="ABB73503.1"/>
    <property type="molecule type" value="Genomic_DNA"/>
</dbReference>
<dbReference type="RefSeq" id="WP_011379557.1">
    <property type="nucleotide sequence ID" value="NC_007614.1"/>
</dbReference>
<dbReference type="SMR" id="Q2YCL8"/>
<dbReference type="STRING" id="323848.Nmul_A0195"/>
<dbReference type="KEGG" id="nmu:Nmul_A0195"/>
<dbReference type="eggNOG" id="COG0792">
    <property type="taxonomic scope" value="Bacteria"/>
</dbReference>
<dbReference type="HOGENOM" id="CLU_115353_1_0_4"/>
<dbReference type="OrthoDB" id="9794876at2"/>
<dbReference type="Proteomes" id="UP000002718">
    <property type="component" value="Chromosome"/>
</dbReference>
<dbReference type="GO" id="GO:0003676">
    <property type="term" value="F:nucleic acid binding"/>
    <property type="evidence" value="ECO:0007669"/>
    <property type="project" value="InterPro"/>
</dbReference>
<dbReference type="CDD" id="cd20736">
    <property type="entry name" value="PoNe_Nuclease"/>
    <property type="match status" value="1"/>
</dbReference>
<dbReference type="Gene3D" id="3.40.1350.10">
    <property type="match status" value="1"/>
</dbReference>
<dbReference type="HAMAP" id="MF_00048">
    <property type="entry name" value="UPF0102"/>
    <property type="match status" value="1"/>
</dbReference>
<dbReference type="InterPro" id="IPR011335">
    <property type="entry name" value="Restrct_endonuc-II-like"/>
</dbReference>
<dbReference type="InterPro" id="IPR011856">
    <property type="entry name" value="tRNA_endonuc-like_dom_sf"/>
</dbReference>
<dbReference type="InterPro" id="IPR003509">
    <property type="entry name" value="UPF0102_YraN-like"/>
</dbReference>
<dbReference type="NCBIfam" id="NF009150">
    <property type="entry name" value="PRK12497.1-3"/>
    <property type="match status" value="1"/>
</dbReference>
<dbReference type="NCBIfam" id="TIGR00252">
    <property type="entry name" value="YraN family protein"/>
    <property type="match status" value="1"/>
</dbReference>
<dbReference type="PANTHER" id="PTHR34039">
    <property type="entry name" value="UPF0102 PROTEIN YRAN"/>
    <property type="match status" value="1"/>
</dbReference>
<dbReference type="PANTHER" id="PTHR34039:SF1">
    <property type="entry name" value="UPF0102 PROTEIN YRAN"/>
    <property type="match status" value="1"/>
</dbReference>
<dbReference type="Pfam" id="PF02021">
    <property type="entry name" value="UPF0102"/>
    <property type="match status" value="1"/>
</dbReference>
<dbReference type="SUPFAM" id="SSF52980">
    <property type="entry name" value="Restriction endonuclease-like"/>
    <property type="match status" value="1"/>
</dbReference>
<evidence type="ECO:0000255" key="1">
    <source>
        <dbReference type="HAMAP-Rule" id="MF_00048"/>
    </source>
</evidence>
<name>Y195_NITMU</name>
<comment type="similarity">
    <text evidence="1">Belongs to the UPF0102 family.</text>
</comment>
<protein>
    <recommendedName>
        <fullName evidence="1">UPF0102 protein Nmul_A0195</fullName>
    </recommendedName>
</protein>
<organism>
    <name type="scientific">Nitrosospira multiformis (strain ATCC 25196 / NCIMB 11849 / C 71)</name>
    <dbReference type="NCBI Taxonomy" id="323848"/>
    <lineage>
        <taxon>Bacteria</taxon>
        <taxon>Pseudomonadati</taxon>
        <taxon>Pseudomonadota</taxon>
        <taxon>Betaproteobacteria</taxon>
        <taxon>Nitrosomonadales</taxon>
        <taxon>Nitrosomonadaceae</taxon>
        <taxon>Nitrosospira</taxon>
    </lineage>
</organism>
<reference key="1">
    <citation type="submission" date="2005-08" db="EMBL/GenBank/DDBJ databases">
        <title>Complete sequence of chromosome 1 of Nitrosospira multiformis ATCC 25196.</title>
        <authorList>
            <person name="Copeland A."/>
            <person name="Lucas S."/>
            <person name="Lapidus A."/>
            <person name="Barry K."/>
            <person name="Detter J.C."/>
            <person name="Glavina T."/>
            <person name="Hammon N."/>
            <person name="Israni S."/>
            <person name="Pitluck S."/>
            <person name="Chain P."/>
            <person name="Malfatti S."/>
            <person name="Shin M."/>
            <person name="Vergez L."/>
            <person name="Schmutz J."/>
            <person name="Larimer F."/>
            <person name="Land M."/>
            <person name="Hauser L."/>
            <person name="Kyrpides N."/>
            <person name="Lykidis A."/>
            <person name="Richardson P."/>
        </authorList>
    </citation>
    <scope>NUCLEOTIDE SEQUENCE [LARGE SCALE GENOMIC DNA]</scope>
    <source>
        <strain>ATCC 25196 / NCIMB 11849 / C 71</strain>
    </source>
</reference>